<comment type="function">
    <text>Plant lipoxygenase may be involved in a number of diverse aspects of plant physiology including growth and development, pest resistance, and senescence or responses to wounding. It catalyzes the hydroperoxidation of lipids containing a cis,cis-1,4-pentadiene structure.</text>
</comment>
<comment type="catalytic activity">
    <reaction>
        <text>(9Z,12Z)-octadecadienoate + O2 = (9S)-hydroperoxy-(10E,12Z)-octadecadienoate</text>
        <dbReference type="Rhea" id="RHEA:30291"/>
        <dbReference type="ChEBI" id="CHEBI:15379"/>
        <dbReference type="ChEBI" id="CHEBI:30245"/>
        <dbReference type="ChEBI" id="CHEBI:60955"/>
        <dbReference type="EC" id="1.13.11.58"/>
    </reaction>
</comment>
<comment type="cofactor">
    <cofactor evidence="2">
        <name>Fe cation</name>
        <dbReference type="ChEBI" id="CHEBI:24875"/>
    </cofactor>
    <text evidence="2">Binds 1 Fe cation per subunit. Iron is tightly bound.</text>
</comment>
<comment type="pathway">
    <text evidence="2">Lipid metabolism; oxylipin biosynthesis.</text>
</comment>
<comment type="subunit">
    <text>Monomer.</text>
</comment>
<comment type="subcellular location">
    <subcellularLocation>
        <location>Cytoplasm</location>
    </subcellularLocation>
</comment>
<comment type="miscellaneous">
    <text>Soybean contains at least 4 distinct isoenzymes, L-1, L-2, L-3a and L-3b in dry seeds, and at least two distinct isozymes in the hypocotyl/radicle region of the seedling stem.</text>
</comment>
<comment type="similarity">
    <text evidence="4">Belongs to the lipoxygenase family.</text>
</comment>
<comment type="sequence caution" evidence="4">
    <conflict type="frameshift" ref="2"/>
</comment>
<gene>
    <name type="primary">LOX1.2</name>
    <name type="synonym">LOX2</name>
</gene>
<name>LOX2_SOYBN</name>
<feature type="chain" id="PRO_0000220718" description="Seed linoleate 9S-lipoxygenase-2">
    <location>
        <begin position="1"/>
        <end position="865"/>
    </location>
</feature>
<feature type="domain" description="PLAT" evidence="1">
    <location>
        <begin position="50"/>
        <end position="175"/>
    </location>
</feature>
<feature type="domain" description="Lipoxygenase" evidence="2">
    <location>
        <begin position="178"/>
        <end position="865"/>
    </location>
</feature>
<feature type="region of interest" description="Disordered" evidence="3">
    <location>
        <begin position="234"/>
        <end position="265"/>
    </location>
</feature>
<feature type="compositionally biased region" description="Basic and acidic residues" evidence="3">
    <location>
        <begin position="255"/>
        <end position="265"/>
    </location>
</feature>
<feature type="binding site" evidence="2">
    <location>
        <position position="527"/>
    </location>
    <ligand>
        <name>Fe cation</name>
        <dbReference type="ChEBI" id="CHEBI:24875"/>
        <note>catalytic</note>
    </ligand>
</feature>
<feature type="binding site" evidence="2">
    <location>
        <position position="532"/>
    </location>
    <ligand>
        <name>Fe cation</name>
        <dbReference type="ChEBI" id="CHEBI:24875"/>
        <note>catalytic</note>
    </ligand>
</feature>
<feature type="binding site" evidence="2">
    <location>
        <position position="718"/>
    </location>
    <ligand>
        <name>Fe cation</name>
        <dbReference type="ChEBI" id="CHEBI:24875"/>
        <note>catalytic</note>
    </ligand>
</feature>
<feature type="binding site" evidence="2">
    <location>
        <position position="722"/>
    </location>
    <ligand>
        <name>Fe cation</name>
        <dbReference type="ChEBI" id="CHEBI:24875"/>
        <note>catalytic</note>
    </ligand>
</feature>
<feature type="binding site" evidence="2">
    <location>
        <position position="865"/>
    </location>
    <ligand>
        <name>Fe cation</name>
        <dbReference type="ChEBI" id="CHEBI:24875"/>
        <note>catalytic</note>
    </ligand>
</feature>
<feature type="sequence conflict" description="In Ref. 2." evidence="4" ref="2">
    <original>KP</original>
    <variation>NL</variation>
    <location>
        <begin position="263"/>
        <end position="264"/>
    </location>
</feature>
<feature type="sequence conflict" description="In Ref. 2." evidence="4" ref="2">
    <original>D</original>
    <variation>Y</variation>
    <location>
        <position position="313"/>
    </location>
</feature>
<feature type="sequence conflict" description="In Ref. 2." evidence="4" ref="2">
    <original>L</original>
    <variation>P</variation>
    <location>
        <position position="400"/>
    </location>
</feature>
<feature type="sequence conflict" description="In Ref. 2." evidence="4" ref="2">
    <original>L</original>
    <variation>H</variation>
    <location>
        <position position="428"/>
    </location>
</feature>
<feature type="sequence conflict" description="In Ref. 2." evidence="4" ref="2">
    <original>D</original>
    <variation>G</variation>
    <location>
        <position position="486"/>
    </location>
</feature>
<feature type="sequence conflict" description="In Ref. 2." evidence="4" ref="2">
    <original>V</original>
    <variation>G</variation>
    <location>
        <position position="502"/>
    </location>
</feature>
<feature type="sequence conflict" description="In Ref. 2." evidence="4" ref="2">
    <original>V</original>
    <variation>L</variation>
    <location>
        <position position="534"/>
    </location>
</feature>
<protein>
    <recommendedName>
        <fullName>Seed linoleate 9S-lipoxygenase-2</fullName>
        <ecNumber>1.13.11.58</ecNumber>
    </recommendedName>
    <alternativeName>
        <fullName>Lipoxygenase-2</fullName>
        <shortName>L-2</shortName>
    </alternativeName>
</protein>
<proteinExistence type="evidence at transcript level"/>
<accession>P09439</accession>
<dbReference type="EC" id="1.13.11.58"/>
<dbReference type="EMBL" id="J03211">
    <property type="protein sequence ID" value="AAA33987.1"/>
    <property type="molecule type" value="mRNA"/>
</dbReference>
<dbReference type="EMBL" id="X56139">
    <property type="protein sequence ID" value="CAA39605.1"/>
    <property type="molecule type" value="Genomic_DNA"/>
</dbReference>
<dbReference type="PIR" id="A28161">
    <property type="entry name" value="DASYL1"/>
</dbReference>
<dbReference type="SMR" id="P09439"/>
<dbReference type="STRING" id="3847.P09439"/>
<dbReference type="PaxDb" id="3847-GLYMA13G42310.1"/>
<dbReference type="eggNOG" id="ENOG502QQSP">
    <property type="taxonomic scope" value="Eukaryota"/>
</dbReference>
<dbReference type="InParanoid" id="P09439"/>
<dbReference type="UniPathway" id="UPA00382"/>
<dbReference type="Proteomes" id="UP000008827">
    <property type="component" value="Unplaced"/>
</dbReference>
<dbReference type="GO" id="GO:0005737">
    <property type="term" value="C:cytoplasm"/>
    <property type="evidence" value="ECO:0007669"/>
    <property type="project" value="UniProtKB-SubCell"/>
</dbReference>
<dbReference type="GO" id="GO:1990136">
    <property type="term" value="F:linoleate 9S-lipoxygenase activity"/>
    <property type="evidence" value="ECO:0007669"/>
    <property type="project" value="UniProtKB-EC"/>
</dbReference>
<dbReference type="GO" id="GO:0046872">
    <property type="term" value="F:metal ion binding"/>
    <property type="evidence" value="ECO:0007669"/>
    <property type="project" value="UniProtKB-KW"/>
</dbReference>
<dbReference type="GO" id="GO:0016702">
    <property type="term" value="F:oxidoreductase activity, acting on single donors with incorporation of molecular oxygen, incorporation of two atoms of oxygen"/>
    <property type="evidence" value="ECO:0000318"/>
    <property type="project" value="GO_Central"/>
</dbReference>
<dbReference type="GO" id="GO:0006633">
    <property type="term" value="P:fatty acid biosynthetic process"/>
    <property type="evidence" value="ECO:0007669"/>
    <property type="project" value="UniProtKB-KW"/>
</dbReference>
<dbReference type="GO" id="GO:0034440">
    <property type="term" value="P:lipid oxidation"/>
    <property type="evidence" value="ECO:0000318"/>
    <property type="project" value="GO_Central"/>
</dbReference>
<dbReference type="GO" id="GO:0031408">
    <property type="term" value="P:oxylipin biosynthetic process"/>
    <property type="evidence" value="ECO:0007669"/>
    <property type="project" value="UniProtKB-UniPathway"/>
</dbReference>
<dbReference type="CDD" id="cd01751">
    <property type="entry name" value="PLAT_LH2"/>
    <property type="match status" value="1"/>
</dbReference>
<dbReference type="FunFam" id="1.20.245.10:FF:000002">
    <property type="entry name" value="Lipoxygenase"/>
    <property type="match status" value="1"/>
</dbReference>
<dbReference type="FunFam" id="3.10.450.60:FF:000002">
    <property type="entry name" value="Lipoxygenase"/>
    <property type="match status" value="1"/>
</dbReference>
<dbReference type="FunFam" id="4.10.375.10:FF:000001">
    <property type="entry name" value="Lipoxygenase"/>
    <property type="match status" value="1"/>
</dbReference>
<dbReference type="Gene3D" id="3.10.450.60">
    <property type="match status" value="1"/>
</dbReference>
<dbReference type="Gene3D" id="4.10.375.10">
    <property type="entry name" value="Lipoxygenase-1, Domain 2"/>
    <property type="match status" value="1"/>
</dbReference>
<dbReference type="Gene3D" id="4.10.372.10">
    <property type="entry name" value="Lipoxygenase-1, Domain 3"/>
    <property type="match status" value="1"/>
</dbReference>
<dbReference type="Gene3D" id="1.20.245.10">
    <property type="entry name" value="Lipoxygenase-1, Domain 5"/>
    <property type="match status" value="1"/>
</dbReference>
<dbReference type="Gene3D" id="2.60.60.20">
    <property type="entry name" value="PLAT/LH2 domain"/>
    <property type="match status" value="1"/>
</dbReference>
<dbReference type="InterPro" id="IPR000907">
    <property type="entry name" value="LipOase"/>
</dbReference>
<dbReference type="InterPro" id="IPR013819">
    <property type="entry name" value="LipOase_C"/>
</dbReference>
<dbReference type="InterPro" id="IPR036226">
    <property type="entry name" value="LipOase_C_sf"/>
</dbReference>
<dbReference type="InterPro" id="IPR020834">
    <property type="entry name" value="LipOase_CS"/>
</dbReference>
<dbReference type="InterPro" id="IPR020833">
    <property type="entry name" value="LipOase_Fe_BS"/>
</dbReference>
<dbReference type="InterPro" id="IPR001246">
    <property type="entry name" value="LipOase_plant"/>
</dbReference>
<dbReference type="InterPro" id="IPR042057">
    <property type="entry name" value="Lipoxy_PLAT/LH2"/>
</dbReference>
<dbReference type="InterPro" id="IPR027433">
    <property type="entry name" value="Lipoxygenase_dom_3"/>
</dbReference>
<dbReference type="InterPro" id="IPR001024">
    <property type="entry name" value="PLAT/LH2_dom"/>
</dbReference>
<dbReference type="InterPro" id="IPR036392">
    <property type="entry name" value="PLAT/LH2_dom_sf"/>
</dbReference>
<dbReference type="PANTHER" id="PTHR11771">
    <property type="entry name" value="LIPOXYGENASE"/>
    <property type="match status" value="1"/>
</dbReference>
<dbReference type="Pfam" id="PF00305">
    <property type="entry name" value="Lipoxygenase"/>
    <property type="match status" value="1"/>
</dbReference>
<dbReference type="Pfam" id="PF01477">
    <property type="entry name" value="PLAT"/>
    <property type="match status" value="1"/>
</dbReference>
<dbReference type="PRINTS" id="PR00087">
    <property type="entry name" value="LIPOXYGENASE"/>
</dbReference>
<dbReference type="PRINTS" id="PR00468">
    <property type="entry name" value="PLTLPOXGNASE"/>
</dbReference>
<dbReference type="SMART" id="SM00308">
    <property type="entry name" value="LH2"/>
    <property type="match status" value="1"/>
</dbReference>
<dbReference type="SUPFAM" id="SSF49723">
    <property type="entry name" value="Lipase/lipooxygenase domain (PLAT/LH2 domain)"/>
    <property type="match status" value="1"/>
</dbReference>
<dbReference type="SUPFAM" id="SSF48484">
    <property type="entry name" value="Lipoxigenase"/>
    <property type="match status" value="1"/>
</dbReference>
<dbReference type="PROSITE" id="PS00711">
    <property type="entry name" value="LIPOXYGENASE_1"/>
    <property type="match status" value="1"/>
</dbReference>
<dbReference type="PROSITE" id="PS00081">
    <property type="entry name" value="LIPOXYGENASE_2"/>
    <property type="match status" value="1"/>
</dbReference>
<dbReference type="PROSITE" id="PS51393">
    <property type="entry name" value="LIPOXYGENASE_3"/>
    <property type="match status" value="1"/>
</dbReference>
<dbReference type="PROSITE" id="PS50095">
    <property type="entry name" value="PLAT"/>
    <property type="match status" value="1"/>
</dbReference>
<reference key="1">
    <citation type="journal article" date="1988" name="J. Biol. Chem.">
        <title>Primary structure of soybean lipoxygenase L-2.</title>
        <authorList>
            <person name="Shibata D."/>
            <person name="Steczko J."/>
            <person name="Dixon J.E."/>
            <person name="Andrews P.C."/>
            <person name="Hermodson M."/>
            <person name="Axelrod B."/>
        </authorList>
    </citation>
    <scope>NUCLEOTIDE SEQUENCE [MRNA]</scope>
</reference>
<reference key="2">
    <citation type="journal article" date="1986" name="Plant Mol. Biol.">
        <title>Two soybean seed lipoxygenase nulls accumulate reduced levels of lipoxygenase transcripts.</title>
        <authorList>
            <person name="Start W.G."/>
            <person name="Ma Y."/>
            <person name="Polacco J.C."/>
            <person name="Hildebrand D.F."/>
            <person name="Freyer G.A."/>
            <person name="Altschuler M."/>
        </authorList>
        <dbReference type="AGRICOLA" id="IND87003970"/>
    </citation>
    <scope>NUCLEOTIDE SEQUENCE [GENOMIC DNA] OF 231-865</scope>
</reference>
<reference key="3">
    <citation type="journal article" date="1991" name="Plant Mol. Biol.">
        <title>Nucleotide sequences of a soybean lipoxygenase gene and the short intergenic region between an upstream lipoxygenase gene.</title>
        <authorList>
            <person name="Shibata D."/>
            <person name="Kato T."/>
            <person name="Tanaka K."/>
        </authorList>
    </citation>
    <scope>NUCLEOTIDE SEQUENCE [GENOMIC DNA] OF 859-865</scope>
</reference>
<keyword id="KW-0963">Cytoplasm</keyword>
<keyword id="KW-0223">Dioxygenase</keyword>
<keyword id="KW-0275">Fatty acid biosynthesis</keyword>
<keyword id="KW-0276">Fatty acid metabolism</keyword>
<keyword id="KW-0408">Iron</keyword>
<keyword id="KW-0444">Lipid biosynthesis</keyword>
<keyword id="KW-0443">Lipid metabolism</keyword>
<keyword id="KW-0479">Metal-binding</keyword>
<keyword id="KW-0560">Oxidoreductase</keyword>
<keyword id="KW-0925">Oxylipin biosynthesis</keyword>
<keyword id="KW-1185">Reference proteome</keyword>
<sequence length="865" mass="97146">MFSVPGVSGILNRGGGHKIKGTVVLMRKNVLDFNSVADLTKGNVGGLIGTGLNVVGSTLDNLTAFLGRSVALQLISATKPLANGKGKVGKDTFLEGIIVSLPTLGAGESAFNIQFEWDESMGIPGAFYIKNYMQVEFYLKSLTLEDVPNQGTIRFVCNSWVYNTKLYKSVRIFFANHTYVPSETPAALVGYREEELKNLRGDGKGERKEHDRIYDYDVYNDLGNPDHGENFARPILGGSSTHPYPRRGRTGRYPTRKDQNSEKPGEVYVPRDENFGHLKSSDFLAYGIKSLSQYVLPAFESVFDLNFTPNEFDSFQDVRDLHEGGIKLPTEVISTIMPLPVVKELFRTDGEQVLKFPPPHVIQVSKSAWMTDEEFAREMVAGVNPCVIRGLQEFPPKSNLDPTIYGEQTSKITADALDLDGYTVDEALASRRLFMLDYHDVFMPYIRRINQTYAKAYATRTILFLRENGTLKPVAIELSLPHPAGDLSGAVSQVILPAKEGVESTIWLLAKAYVVVNDSCYHQLMSHWLNTHAVIEPFIIATNRHLSALHPIYKLLTPHYRDTMNINALARQSLINADGIIEKSFLPSKHSVEMSSAVYKNWVFTDQALPADLIKRGVAIKDPSAPHGLRLLIEDYPYAVDGLEIWAAIKTWVQEYVSLYYARDDDVKPDSELQQWWKEAVEKGHGDLKDKPWWPKLQTIEELVEICTIIIWTASALHAAVNFGQYPYGGFILNRPTSSRRLLPEKGTPEYEEMVKSHQKAYLRTITSKFQTLVDLSVIEILSRHASDEVYLGQRDNPHWTSDSKALQAFQKFGNKLKEIEEKLARKNNDQSLSNRLGPVQLPYTLLHPNSEGLTCRGIPNSISI</sequence>
<organism>
    <name type="scientific">Glycine max</name>
    <name type="common">Soybean</name>
    <name type="synonym">Glycine hispida</name>
    <dbReference type="NCBI Taxonomy" id="3847"/>
    <lineage>
        <taxon>Eukaryota</taxon>
        <taxon>Viridiplantae</taxon>
        <taxon>Streptophyta</taxon>
        <taxon>Embryophyta</taxon>
        <taxon>Tracheophyta</taxon>
        <taxon>Spermatophyta</taxon>
        <taxon>Magnoliopsida</taxon>
        <taxon>eudicotyledons</taxon>
        <taxon>Gunneridae</taxon>
        <taxon>Pentapetalae</taxon>
        <taxon>rosids</taxon>
        <taxon>fabids</taxon>
        <taxon>Fabales</taxon>
        <taxon>Fabaceae</taxon>
        <taxon>Papilionoideae</taxon>
        <taxon>50 kb inversion clade</taxon>
        <taxon>NPAAA clade</taxon>
        <taxon>indigoferoid/millettioid clade</taxon>
        <taxon>Phaseoleae</taxon>
        <taxon>Glycine</taxon>
        <taxon>Glycine subgen. Soja</taxon>
    </lineage>
</organism>
<evidence type="ECO:0000255" key="1">
    <source>
        <dbReference type="PROSITE-ProRule" id="PRU00152"/>
    </source>
</evidence>
<evidence type="ECO:0000255" key="2">
    <source>
        <dbReference type="PROSITE-ProRule" id="PRU00726"/>
    </source>
</evidence>
<evidence type="ECO:0000256" key="3">
    <source>
        <dbReference type="SAM" id="MobiDB-lite"/>
    </source>
</evidence>
<evidence type="ECO:0000305" key="4"/>